<gene>
    <name type="ordered locus">CLB_3739</name>
</gene>
<accession>A7FPL4</accession>
<protein>
    <recommendedName>
        <fullName evidence="1">Putative membrane protein insertion efficiency factor</fullName>
    </recommendedName>
</protein>
<comment type="function">
    <text evidence="1">Could be involved in insertion of integral membrane proteins into the membrane.</text>
</comment>
<comment type="subcellular location">
    <subcellularLocation>
        <location evidence="1">Cell membrane</location>
        <topology evidence="1">Peripheral membrane protein</topology>
        <orientation evidence="1">Cytoplasmic side</orientation>
    </subcellularLocation>
</comment>
<comment type="similarity">
    <text evidence="1">Belongs to the UPF0161 family.</text>
</comment>
<organism>
    <name type="scientific">Clostridium botulinum (strain ATCC 19397 / Type A)</name>
    <dbReference type="NCBI Taxonomy" id="441770"/>
    <lineage>
        <taxon>Bacteria</taxon>
        <taxon>Bacillati</taxon>
        <taxon>Bacillota</taxon>
        <taxon>Clostridia</taxon>
        <taxon>Eubacteriales</taxon>
        <taxon>Clostridiaceae</taxon>
        <taxon>Clostridium</taxon>
    </lineage>
</organism>
<feature type="chain" id="PRO_1000013081" description="Putative membrane protein insertion efficiency factor">
    <location>
        <begin position="1"/>
        <end position="69"/>
    </location>
</feature>
<sequence length="69" mass="8031">MKNLLICIIKMYRKYISPLKRPSCRFYPTCSQYSIEAIEKYGALKGTLISIKRILKCHPFNEGGYDPVK</sequence>
<reference key="1">
    <citation type="journal article" date="2007" name="PLoS ONE">
        <title>Analysis of the neurotoxin complex genes in Clostridium botulinum A1-A4 and B1 strains: BoNT/A3, /Ba4 and /B1 clusters are located within plasmids.</title>
        <authorList>
            <person name="Smith T.J."/>
            <person name="Hill K.K."/>
            <person name="Foley B.T."/>
            <person name="Detter J.C."/>
            <person name="Munk A.C."/>
            <person name="Bruce D.C."/>
            <person name="Doggett N.A."/>
            <person name="Smith L.A."/>
            <person name="Marks J.D."/>
            <person name="Xie G."/>
            <person name="Brettin T.S."/>
        </authorList>
    </citation>
    <scope>NUCLEOTIDE SEQUENCE [LARGE SCALE GENOMIC DNA]</scope>
    <source>
        <strain>ATCC 19397 / Type A</strain>
    </source>
</reference>
<evidence type="ECO:0000255" key="1">
    <source>
        <dbReference type="HAMAP-Rule" id="MF_00386"/>
    </source>
</evidence>
<proteinExistence type="inferred from homology"/>
<name>YIDD_CLOB1</name>
<keyword id="KW-1003">Cell membrane</keyword>
<keyword id="KW-0472">Membrane</keyword>
<dbReference type="EMBL" id="CP000726">
    <property type="protein sequence ID" value="ABS35432.1"/>
    <property type="molecule type" value="Genomic_DNA"/>
</dbReference>
<dbReference type="KEGG" id="cba:CLB_3739"/>
<dbReference type="HOGENOM" id="CLU_144811_6_0_9"/>
<dbReference type="GO" id="GO:0005886">
    <property type="term" value="C:plasma membrane"/>
    <property type="evidence" value="ECO:0007669"/>
    <property type="project" value="UniProtKB-SubCell"/>
</dbReference>
<dbReference type="HAMAP" id="MF_00386">
    <property type="entry name" value="UPF0161_YidD"/>
    <property type="match status" value="1"/>
</dbReference>
<dbReference type="InterPro" id="IPR002696">
    <property type="entry name" value="Membr_insert_effic_factor_YidD"/>
</dbReference>
<dbReference type="NCBIfam" id="TIGR00278">
    <property type="entry name" value="membrane protein insertion efficiency factor YidD"/>
    <property type="match status" value="1"/>
</dbReference>
<dbReference type="PANTHER" id="PTHR33383">
    <property type="entry name" value="MEMBRANE PROTEIN INSERTION EFFICIENCY FACTOR-RELATED"/>
    <property type="match status" value="1"/>
</dbReference>
<dbReference type="PANTHER" id="PTHR33383:SF1">
    <property type="entry name" value="MEMBRANE PROTEIN INSERTION EFFICIENCY FACTOR-RELATED"/>
    <property type="match status" value="1"/>
</dbReference>
<dbReference type="Pfam" id="PF01809">
    <property type="entry name" value="YidD"/>
    <property type="match status" value="1"/>
</dbReference>
<dbReference type="SMART" id="SM01234">
    <property type="entry name" value="Haemolytic"/>
    <property type="match status" value="1"/>
</dbReference>